<protein>
    <recommendedName>
        <fullName evidence="1">UPF0502 protein Bcep1808_3727</fullName>
    </recommendedName>
</protein>
<feature type="chain" id="PRO_0000382554" description="UPF0502 protein Bcep1808_3727">
    <location>
        <begin position="1"/>
        <end position="236"/>
    </location>
</feature>
<gene>
    <name type="ordered locus">Bcep1808_3727</name>
</gene>
<organism>
    <name type="scientific">Burkholderia vietnamiensis (strain G4 / LMG 22486)</name>
    <name type="common">Burkholderia cepacia (strain R1808)</name>
    <dbReference type="NCBI Taxonomy" id="269482"/>
    <lineage>
        <taxon>Bacteria</taxon>
        <taxon>Pseudomonadati</taxon>
        <taxon>Pseudomonadota</taxon>
        <taxon>Betaproteobacteria</taxon>
        <taxon>Burkholderiales</taxon>
        <taxon>Burkholderiaceae</taxon>
        <taxon>Burkholderia</taxon>
        <taxon>Burkholderia cepacia complex</taxon>
    </lineage>
</organism>
<sequence>MNTTPDLPTPRALRELTPLEARILGVLVEKQHTVPDTYPLSLNALTAGCNQKTARSPVMSVSEDEVTAALDGLKHLSLVMEGSSSRVPRFEHNMNRVLGIPSQAIALLTILLLRGPQTAAELRLNSARLHGFADISSVEAFLDELAARAQPLVVRLPRAPGARENRWMHLMCGDVNLADFAGSDAGGGADSVPPSEFEALKAEQKRLVDEVARLNALVQRMATELGIDVDAPGDAG</sequence>
<evidence type="ECO:0000255" key="1">
    <source>
        <dbReference type="HAMAP-Rule" id="MF_01584"/>
    </source>
</evidence>
<accession>A4JKA9</accession>
<dbReference type="EMBL" id="CP000615">
    <property type="protein sequence ID" value="ABO56712.1"/>
    <property type="molecule type" value="Genomic_DNA"/>
</dbReference>
<dbReference type="SMR" id="A4JKA9"/>
<dbReference type="KEGG" id="bvi:Bcep1808_3727"/>
<dbReference type="eggNOG" id="COG3132">
    <property type="taxonomic scope" value="Bacteria"/>
</dbReference>
<dbReference type="HOGENOM" id="CLU_057831_0_0_4"/>
<dbReference type="Proteomes" id="UP000002287">
    <property type="component" value="Chromosome 2"/>
</dbReference>
<dbReference type="Gene3D" id="1.10.10.10">
    <property type="entry name" value="Winged helix-like DNA-binding domain superfamily/Winged helix DNA-binding domain"/>
    <property type="match status" value="2"/>
</dbReference>
<dbReference type="HAMAP" id="MF_01584">
    <property type="entry name" value="UPF0502"/>
    <property type="match status" value="1"/>
</dbReference>
<dbReference type="InterPro" id="IPR007432">
    <property type="entry name" value="DUF480"/>
</dbReference>
<dbReference type="InterPro" id="IPR036388">
    <property type="entry name" value="WH-like_DNA-bd_sf"/>
</dbReference>
<dbReference type="InterPro" id="IPR036390">
    <property type="entry name" value="WH_DNA-bd_sf"/>
</dbReference>
<dbReference type="PANTHER" id="PTHR38768">
    <property type="entry name" value="UPF0502 PROTEIN YCEH"/>
    <property type="match status" value="1"/>
</dbReference>
<dbReference type="PANTHER" id="PTHR38768:SF1">
    <property type="entry name" value="UPF0502 PROTEIN YCEH"/>
    <property type="match status" value="1"/>
</dbReference>
<dbReference type="Pfam" id="PF04337">
    <property type="entry name" value="DUF480"/>
    <property type="match status" value="1"/>
</dbReference>
<dbReference type="SUPFAM" id="SSF46785">
    <property type="entry name" value="Winged helix' DNA-binding domain"/>
    <property type="match status" value="2"/>
</dbReference>
<comment type="similarity">
    <text evidence="1">Belongs to the UPF0502 family.</text>
</comment>
<reference key="1">
    <citation type="submission" date="2007-03" db="EMBL/GenBank/DDBJ databases">
        <title>Complete sequence of chromosome 2 of Burkholderia vietnamiensis G4.</title>
        <authorList>
            <consortium name="US DOE Joint Genome Institute"/>
            <person name="Copeland A."/>
            <person name="Lucas S."/>
            <person name="Lapidus A."/>
            <person name="Barry K."/>
            <person name="Detter J.C."/>
            <person name="Glavina del Rio T."/>
            <person name="Hammon N."/>
            <person name="Israni S."/>
            <person name="Dalin E."/>
            <person name="Tice H."/>
            <person name="Pitluck S."/>
            <person name="Chain P."/>
            <person name="Malfatti S."/>
            <person name="Shin M."/>
            <person name="Vergez L."/>
            <person name="Schmutz J."/>
            <person name="Larimer F."/>
            <person name="Land M."/>
            <person name="Hauser L."/>
            <person name="Kyrpides N."/>
            <person name="Tiedje J."/>
            <person name="Richardson P."/>
        </authorList>
    </citation>
    <scope>NUCLEOTIDE SEQUENCE [LARGE SCALE GENOMIC DNA]</scope>
    <source>
        <strain>G4 / LMG 22486</strain>
    </source>
</reference>
<proteinExistence type="inferred from homology"/>
<name>Y3727_BURVG</name>